<comment type="function">
    <text evidence="1 2">Precursor peptide that leads to mycofactocin (MFT) after extensive post-translational modifications by enzymes encoded by adjacent genes. Mycofactocin acts as a redox cofactor of nicotinamide-dependent oxidoreductases encoded in the same locus.</text>
</comment>
<comment type="subunit">
    <text evidence="1">Interacts with MftB.</text>
</comment>
<comment type="PTM">
    <text evidence="1 2 3">The post-translational modifications that lead to mycofactocin involve oxidative decarboxylation of the C-terminal tyrosine residue catalyzed by MftC, introduction of a tyramine-valine cross-link, removal of the modified C-terminal dipeptide by MftE. The released dipeptide then undergoes oxidative deamination by MftD, glycosylation by MftF and methylation by an unknown enzyme.</text>
</comment>
<comment type="miscellaneous">
    <text evidence="6">Mycofactocin is classified as a ribosomally synthesized and post-translationally modified peptide (RiPP).</text>
</comment>
<comment type="similarity">
    <text evidence="6">Belongs to the mycofactocin precursor peptide family.</text>
</comment>
<evidence type="ECO:0000269" key="1">
    <source>
    </source>
</evidence>
<evidence type="ECO:0000269" key="2">
    <source>
    </source>
</evidence>
<evidence type="ECO:0000269" key="3">
    <source>
    </source>
</evidence>
<evidence type="ECO:0000303" key="4">
    <source>
    </source>
</evidence>
<evidence type="ECO:0000303" key="5">
    <source>
    </source>
</evidence>
<evidence type="ECO:0000305" key="6"/>
<name>MFTA_MYCUA</name>
<protein>
    <recommendedName>
        <fullName evidence="4">Mycofactocin precursor peptide</fullName>
    </recommendedName>
</protein>
<accession>P0DUE9</accession>
<reference key="1">
    <citation type="journal article" date="2007" name="Genome Res.">
        <title>Reductive evolution and niche adaptation inferred from the genome of Mycobacterium ulcerans, the causative agent of Buruli ulcer.</title>
        <authorList>
            <person name="Stinear T.P."/>
            <person name="Seemann T."/>
            <person name="Pidot S."/>
            <person name="Frigui W."/>
            <person name="Reysset G."/>
            <person name="Garnier T."/>
            <person name="Meurice G."/>
            <person name="Simon D."/>
            <person name="Bouchier C."/>
            <person name="Ma L."/>
            <person name="Tichit M."/>
            <person name="Porter J.L."/>
            <person name="Ryan J."/>
            <person name="Johnson P.D.R."/>
            <person name="Davies J.K."/>
            <person name="Jenkin G.A."/>
            <person name="Small P.L.C."/>
            <person name="Jones L.M."/>
            <person name="Tekaia F."/>
            <person name="Laval F."/>
            <person name="Daffe M."/>
            <person name="Parkhill J."/>
            <person name="Cole S.T."/>
        </authorList>
    </citation>
    <scope>NUCLEOTIDE SEQUENCE [LARGE SCALE GENOMIC DNA]</scope>
    <source>
        <strain>Agy99</strain>
    </source>
</reference>
<reference key="2">
    <citation type="journal article" date="2016" name="FEBS Lett.">
        <title>Mycofactocin biosynthesis: modification of the peptide MftA by the radical S-adenosylmethionine protein MftC.</title>
        <authorList>
            <person name="Khaliullin B."/>
            <person name="Aggarwal P."/>
            <person name="Bubas M."/>
            <person name="Eaton G.R."/>
            <person name="Eaton S.S."/>
            <person name="Latham J.A."/>
        </authorList>
    </citation>
    <scope>FUNCTION</scope>
    <scope>INTERACTION WITH MFTB</scope>
    <scope>DECARBOXYLATION</scope>
    <source>
        <strain>Agy99</strain>
    </source>
</reference>
<reference key="3">
    <citation type="journal article" date="2017" name="J. Biol. Chem.">
        <title>Mechanistic elucidation of the mycofactocin-biosynthetic radical S-adenosylmethionine protein, MftC.</title>
        <authorList>
            <person name="Khaliullin B."/>
            <person name="Ayikpoe R."/>
            <person name="Tuttle M."/>
            <person name="Latham J.A."/>
        </authorList>
    </citation>
    <scope>FUNCTION</scope>
    <scope>MUTAGENESIS OF VAL-29 AND TYR-30</scope>
    <scope>DECARBOXYLATION</scope>
    <scope>TYRAMINE-VALINE CROSS-LINK</scope>
    <source>
        <strain>Agy99</strain>
    </source>
</reference>
<reference key="4">
    <citation type="journal article" date="2018" name="Biochemistry">
        <title>Mycofactocin Biosynthesis Proceeds through 3-Amino-5-[(p-hydroxyphenyl)methyl]-4,4-dimethyl-2-pyrrolidinone (AHDP); Direct Observation of MftE Specificity toward MftA.</title>
        <authorList>
            <person name="Ayikpoe R."/>
            <person name="Salazar J."/>
            <person name="Majestic B."/>
            <person name="Latham J.A."/>
        </authorList>
    </citation>
    <scope>CLEAVAGE</scope>
    <source>
        <strain>Agy99</strain>
    </source>
</reference>
<feature type="chain" id="PRO_0000452057" description="Mycofactocin precursor peptide">
    <location>
        <begin position="1"/>
        <end position="30"/>
    </location>
</feature>
<feature type="site" description="Cleavage; by MftE" evidence="3">
    <location>
        <begin position="28"/>
        <end position="29"/>
    </location>
</feature>
<feature type="mutagenesis site" description="Accumulation of decarboxylated tyrosine intermediate." evidence="2">
    <original>V</original>
    <variation>A</variation>
    <location>
        <position position="29"/>
    </location>
</feature>
<feature type="mutagenesis site" description="Loss of MftA decarboxylation by MftC." evidence="2">
    <original>Y</original>
    <variation>F</variation>
    <location>
        <position position="30"/>
    </location>
</feature>
<gene>
    <name evidence="4 5" type="primary">mftA</name>
    <name evidence="6" type="ordered locus">MUL_0771.1</name>
</gene>
<dbReference type="EMBL" id="CP000325">
    <property type="status" value="NOT_ANNOTATED_CDS"/>
    <property type="molecule type" value="Genomic_DNA"/>
</dbReference>
<dbReference type="RefSeq" id="WP_071498352.1">
    <property type="nucleotide sequence ID" value="NC_008611.1"/>
</dbReference>
<dbReference type="GeneID" id="93438616"/>
<dbReference type="Proteomes" id="UP000000765">
    <property type="component" value="Chromosome"/>
</dbReference>
<dbReference type="InterPro" id="IPR023988">
    <property type="entry name" value="MftA"/>
</dbReference>
<dbReference type="NCBIfam" id="TIGR03969">
    <property type="entry name" value="mycofactocin"/>
    <property type="match status" value="1"/>
</dbReference>
<dbReference type="Pfam" id="PF23709">
    <property type="entry name" value="MftA"/>
    <property type="match status" value="1"/>
</dbReference>
<organism>
    <name type="scientific">Mycobacterium ulcerans (strain Agy99)</name>
    <dbReference type="NCBI Taxonomy" id="362242"/>
    <lineage>
        <taxon>Bacteria</taxon>
        <taxon>Bacillati</taxon>
        <taxon>Actinomycetota</taxon>
        <taxon>Actinomycetes</taxon>
        <taxon>Mycobacteriales</taxon>
        <taxon>Mycobacteriaceae</taxon>
        <taxon>Mycobacterium</taxon>
        <taxon>Mycobacterium ulcerans group</taxon>
    </lineage>
</organism>
<proteinExistence type="evidence at protein level"/>
<sequence length="30" mass="3307">MDRETEAETAELVTESLVEEVSIDGMCGVY</sequence>